<gene>
    <name evidence="1" type="primary">frdC</name>
    <name type="ordered locus">PM0199</name>
</gene>
<proteinExistence type="inferred from homology"/>
<organism>
    <name type="scientific">Pasteurella multocida (strain Pm70)</name>
    <dbReference type="NCBI Taxonomy" id="272843"/>
    <lineage>
        <taxon>Bacteria</taxon>
        <taxon>Pseudomonadati</taxon>
        <taxon>Pseudomonadota</taxon>
        <taxon>Gammaproteobacteria</taxon>
        <taxon>Pasteurellales</taxon>
        <taxon>Pasteurellaceae</taxon>
        <taxon>Pasteurella</taxon>
    </lineage>
</organism>
<reference key="1">
    <citation type="journal article" date="2001" name="Proc. Natl. Acad. Sci. U.S.A.">
        <title>Complete genomic sequence of Pasteurella multocida Pm70.</title>
        <authorList>
            <person name="May B.J."/>
            <person name="Zhang Q."/>
            <person name="Li L.L."/>
            <person name="Paustian M.L."/>
            <person name="Whittam T.S."/>
            <person name="Kapur V."/>
        </authorList>
    </citation>
    <scope>NUCLEOTIDE SEQUENCE [LARGE SCALE GENOMIC DNA]</scope>
    <source>
        <strain>Pm70</strain>
    </source>
</reference>
<name>FRDC_PASMU</name>
<protein>
    <recommendedName>
        <fullName evidence="1">Fumarate reductase subunit C</fullName>
    </recommendedName>
    <alternativeName>
        <fullName evidence="1">Quinol-fumarate reductase subunit C</fullName>
        <shortName evidence="1">QFR subunit C</shortName>
    </alternativeName>
</protein>
<feature type="chain" id="PRO_0000196532" description="Fumarate reductase subunit C">
    <location>
        <begin position="1"/>
        <end position="132"/>
    </location>
</feature>
<feature type="transmembrane region" description="Helical" evidence="1">
    <location>
        <begin position="36"/>
        <end position="56"/>
    </location>
</feature>
<feature type="transmembrane region" description="Helical" evidence="1">
    <location>
        <begin position="70"/>
        <end position="90"/>
    </location>
</feature>
<feature type="transmembrane region" description="Helical" evidence="1">
    <location>
        <begin position="110"/>
        <end position="130"/>
    </location>
</feature>
<sequence>MTATTSKRKKYVREMKPTWWKKLDFYKLYIAREATAIPTLWFCLVLLYGVISLGSLDSFGNFISFLKNPIVIILNIITLGAMLLNTVTYYVMTPKVLNIIVKNERINPNIITMALWAVTAFISLVILVFMYV</sequence>
<comment type="function">
    <text evidence="1">Anchors the catalytic components of the fumarate reductase complex to the cell membrane, binds quinones.</text>
</comment>
<comment type="subunit">
    <text evidence="1">Part of an enzyme complex containing four subunits: a flavoprotein (FrdA), an iron-sulfur protein (FrdB), and two hydrophobic anchor proteins (FrdC and FrdD).</text>
</comment>
<comment type="subcellular location">
    <subcellularLocation>
        <location evidence="1">Cell inner membrane</location>
        <topology evidence="1">Multi-pass membrane protein</topology>
    </subcellularLocation>
</comment>
<comment type="similarity">
    <text evidence="1">Belongs to the FrdC family.</text>
</comment>
<dbReference type="EMBL" id="AE004439">
    <property type="protein sequence ID" value="AAK02283.1"/>
    <property type="molecule type" value="Genomic_DNA"/>
</dbReference>
<dbReference type="RefSeq" id="WP_005720692.1">
    <property type="nucleotide sequence ID" value="NC_002663.1"/>
</dbReference>
<dbReference type="SMR" id="Q9CP58"/>
<dbReference type="STRING" id="272843.PM0199"/>
<dbReference type="EnsemblBacteria" id="AAK02283">
    <property type="protein sequence ID" value="AAK02283"/>
    <property type="gene ID" value="PM0199"/>
</dbReference>
<dbReference type="GeneID" id="77207547"/>
<dbReference type="KEGG" id="pmu:PM0199"/>
<dbReference type="HOGENOM" id="CLU_156492_0_0_6"/>
<dbReference type="OrthoDB" id="8909678at2"/>
<dbReference type="Proteomes" id="UP000000809">
    <property type="component" value="Chromosome"/>
</dbReference>
<dbReference type="GO" id="GO:0045283">
    <property type="term" value="C:fumarate reductase complex"/>
    <property type="evidence" value="ECO:0007669"/>
    <property type="project" value="UniProtKB-UniRule"/>
</dbReference>
<dbReference type="GO" id="GO:0005886">
    <property type="term" value="C:plasma membrane"/>
    <property type="evidence" value="ECO:0007669"/>
    <property type="project" value="UniProtKB-SubCell"/>
</dbReference>
<dbReference type="GO" id="GO:0000104">
    <property type="term" value="F:succinate dehydrogenase activity"/>
    <property type="evidence" value="ECO:0007669"/>
    <property type="project" value="UniProtKB-UniRule"/>
</dbReference>
<dbReference type="CDD" id="cd00546">
    <property type="entry name" value="QFR_TypeD_subunitC"/>
    <property type="match status" value="1"/>
</dbReference>
<dbReference type="Gene3D" id="1.20.1300.10">
    <property type="entry name" value="Fumarate reductase/succinate dehydrogenase, transmembrane subunit"/>
    <property type="match status" value="1"/>
</dbReference>
<dbReference type="HAMAP" id="MF_00708">
    <property type="entry name" value="Fumarate_red_C"/>
    <property type="match status" value="1"/>
</dbReference>
<dbReference type="InterPro" id="IPR003510">
    <property type="entry name" value="Fumarate_red_C"/>
</dbReference>
<dbReference type="InterPro" id="IPR034804">
    <property type="entry name" value="SQR/QFR_C/D"/>
</dbReference>
<dbReference type="NCBIfam" id="NF003445">
    <property type="entry name" value="PRK04987.1"/>
    <property type="match status" value="1"/>
</dbReference>
<dbReference type="Pfam" id="PF02300">
    <property type="entry name" value="Fumarate_red_C"/>
    <property type="match status" value="1"/>
</dbReference>
<dbReference type="PIRSF" id="PIRSF000180">
    <property type="entry name" value="FrdC"/>
    <property type="match status" value="1"/>
</dbReference>
<dbReference type="SUPFAM" id="SSF81343">
    <property type="entry name" value="Fumarate reductase respiratory complex transmembrane subunits"/>
    <property type="match status" value="1"/>
</dbReference>
<evidence type="ECO:0000255" key="1">
    <source>
        <dbReference type="HAMAP-Rule" id="MF_00708"/>
    </source>
</evidence>
<keyword id="KW-0997">Cell inner membrane</keyword>
<keyword id="KW-1003">Cell membrane</keyword>
<keyword id="KW-0472">Membrane</keyword>
<keyword id="KW-1185">Reference proteome</keyword>
<keyword id="KW-0812">Transmembrane</keyword>
<keyword id="KW-1133">Transmembrane helix</keyword>
<accession>Q9CP58</accession>